<reference key="1">
    <citation type="journal article" date="2008" name="J. Bacteriol.">
        <title>The complete genome sequence of Actinobacillus pleuropneumoniae L20 (serotype 5b).</title>
        <authorList>
            <person name="Foote S.J."/>
            <person name="Bosse J.T."/>
            <person name="Bouevitch A.B."/>
            <person name="Langford P.R."/>
            <person name="Young N.M."/>
            <person name="Nash J.H.E."/>
        </authorList>
    </citation>
    <scope>NUCLEOTIDE SEQUENCE [LARGE SCALE GENOMIC DNA]</scope>
    <source>
        <strain>L20</strain>
    </source>
</reference>
<proteinExistence type="inferred from homology"/>
<feature type="chain" id="PRO_0000368296" description="ATP synthase subunit b">
    <location>
        <begin position="1"/>
        <end position="156"/>
    </location>
</feature>
<feature type="transmembrane region" description="Helical" evidence="1">
    <location>
        <begin position="7"/>
        <end position="27"/>
    </location>
</feature>
<dbReference type="EMBL" id="CP000569">
    <property type="protein sequence ID" value="ABN74734.1"/>
    <property type="molecule type" value="Genomic_DNA"/>
</dbReference>
<dbReference type="RefSeq" id="WP_009874987.1">
    <property type="nucleotide sequence ID" value="NC_009053.1"/>
</dbReference>
<dbReference type="SMR" id="A3N2U8"/>
<dbReference type="STRING" id="416269.APL_1650"/>
<dbReference type="EnsemblBacteria" id="ABN74734">
    <property type="protein sequence ID" value="ABN74734"/>
    <property type="gene ID" value="APL_1650"/>
</dbReference>
<dbReference type="KEGG" id="apl:APL_1650"/>
<dbReference type="PATRIC" id="fig|416269.6.peg.1716"/>
<dbReference type="eggNOG" id="COG0711">
    <property type="taxonomic scope" value="Bacteria"/>
</dbReference>
<dbReference type="HOGENOM" id="CLU_079215_4_5_6"/>
<dbReference type="Proteomes" id="UP000001432">
    <property type="component" value="Chromosome"/>
</dbReference>
<dbReference type="GO" id="GO:0005886">
    <property type="term" value="C:plasma membrane"/>
    <property type="evidence" value="ECO:0007669"/>
    <property type="project" value="UniProtKB-SubCell"/>
</dbReference>
<dbReference type="GO" id="GO:0045259">
    <property type="term" value="C:proton-transporting ATP synthase complex"/>
    <property type="evidence" value="ECO:0007669"/>
    <property type="project" value="UniProtKB-KW"/>
</dbReference>
<dbReference type="GO" id="GO:0046933">
    <property type="term" value="F:proton-transporting ATP synthase activity, rotational mechanism"/>
    <property type="evidence" value="ECO:0007669"/>
    <property type="project" value="UniProtKB-UniRule"/>
</dbReference>
<dbReference type="GO" id="GO:0046961">
    <property type="term" value="F:proton-transporting ATPase activity, rotational mechanism"/>
    <property type="evidence" value="ECO:0007669"/>
    <property type="project" value="TreeGrafter"/>
</dbReference>
<dbReference type="CDD" id="cd06503">
    <property type="entry name" value="ATP-synt_Fo_b"/>
    <property type="match status" value="1"/>
</dbReference>
<dbReference type="FunFam" id="1.20.5.620:FF:000001">
    <property type="entry name" value="ATP synthase subunit b"/>
    <property type="match status" value="1"/>
</dbReference>
<dbReference type="Gene3D" id="1.20.5.620">
    <property type="entry name" value="F1F0 ATP synthase subunit B, membrane domain"/>
    <property type="match status" value="1"/>
</dbReference>
<dbReference type="HAMAP" id="MF_01398">
    <property type="entry name" value="ATP_synth_b_bprime"/>
    <property type="match status" value="1"/>
</dbReference>
<dbReference type="InterPro" id="IPR028987">
    <property type="entry name" value="ATP_synth_B-like_membr_sf"/>
</dbReference>
<dbReference type="InterPro" id="IPR002146">
    <property type="entry name" value="ATP_synth_b/b'su_bac/chlpt"/>
</dbReference>
<dbReference type="InterPro" id="IPR005864">
    <property type="entry name" value="ATP_synth_F0_bsu_bac"/>
</dbReference>
<dbReference type="InterPro" id="IPR050059">
    <property type="entry name" value="ATP_synthase_B_chain"/>
</dbReference>
<dbReference type="NCBIfam" id="TIGR01144">
    <property type="entry name" value="ATP_synt_b"/>
    <property type="match status" value="1"/>
</dbReference>
<dbReference type="NCBIfam" id="NF004411">
    <property type="entry name" value="PRK05759.1-2"/>
    <property type="match status" value="1"/>
</dbReference>
<dbReference type="NCBIfam" id="NF004413">
    <property type="entry name" value="PRK05759.1-4"/>
    <property type="match status" value="1"/>
</dbReference>
<dbReference type="PANTHER" id="PTHR33445:SF1">
    <property type="entry name" value="ATP SYNTHASE SUBUNIT B"/>
    <property type="match status" value="1"/>
</dbReference>
<dbReference type="PANTHER" id="PTHR33445">
    <property type="entry name" value="ATP SYNTHASE SUBUNIT B', CHLOROPLASTIC"/>
    <property type="match status" value="1"/>
</dbReference>
<dbReference type="Pfam" id="PF00430">
    <property type="entry name" value="ATP-synt_B"/>
    <property type="match status" value="1"/>
</dbReference>
<dbReference type="SUPFAM" id="SSF81573">
    <property type="entry name" value="F1F0 ATP synthase subunit B, membrane domain"/>
    <property type="match status" value="1"/>
</dbReference>
<evidence type="ECO:0000255" key="1">
    <source>
        <dbReference type="HAMAP-Rule" id="MF_01398"/>
    </source>
</evidence>
<organism>
    <name type="scientific">Actinobacillus pleuropneumoniae serotype 5b (strain L20)</name>
    <dbReference type="NCBI Taxonomy" id="416269"/>
    <lineage>
        <taxon>Bacteria</taxon>
        <taxon>Pseudomonadati</taxon>
        <taxon>Pseudomonadota</taxon>
        <taxon>Gammaproteobacteria</taxon>
        <taxon>Pasteurellales</taxon>
        <taxon>Pasteurellaceae</taxon>
        <taxon>Actinobacillus</taxon>
    </lineage>
</organism>
<protein>
    <recommendedName>
        <fullName evidence="1">ATP synthase subunit b</fullName>
    </recommendedName>
    <alternativeName>
        <fullName evidence="1">ATP synthase F(0) sector subunit b</fullName>
    </alternativeName>
    <alternativeName>
        <fullName evidence="1">ATPase subunit I</fullName>
    </alternativeName>
    <alternativeName>
        <fullName evidence="1">F-type ATPase subunit b</fullName>
        <shortName evidence="1">F-ATPase subunit b</shortName>
    </alternativeName>
</protein>
<accession>A3N2U8</accession>
<comment type="function">
    <text evidence="1">F(1)F(0) ATP synthase produces ATP from ADP in the presence of a proton or sodium gradient. F-type ATPases consist of two structural domains, F(1) containing the extramembraneous catalytic core and F(0) containing the membrane proton channel, linked together by a central stalk and a peripheral stalk. During catalysis, ATP synthesis in the catalytic domain of F(1) is coupled via a rotary mechanism of the central stalk subunits to proton translocation.</text>
</comment>
<comment type="function">
    <text evidence="1">Component of the F(0) channel, it forms part of the peripheral stalk, linking F(1) to F(0).</text>
</comment>
<comment type="subunit">
    <text evidence="1">F-type ATPases have 2 components, F(1) - the catalytic core - and F(0) - the membrane proton channel. F(1) has five subunits: alpha(3), beta(3), gamma(1), delta(1), epsilon(1). F(0) has three main subunits: a(1), b(2) and c(10-14). The alpha and beta chains form an alternating ring which encloses part of the gamma chain. F(1) is attached to F(0) by a central stalk formed by the gamma and epsilon chains, while a peripheral stalk is formed by the delta and b chains.</text>
</comment>
<comment type="subcellular location">
    <subcellularLocation>
        <location evidence="1">Cell inner membrane</location>
        <topology evidence="1">Single-pass membrane protein</topology>
    </subcellularLocation>
</comment>
<comment type="similarity">
    <text evidence="1">Belongs to the ATPase B chain family.</text>
</comment>
<keyword id="KW-0066">ATP synthesis</keyword>
<keyword id="KW-0997">Cell inner membrane</keyword>
<keyword id="KW-1003">Cell membrane</keyword>
<keyword id="KW-0138">CF(0)</keyword>
<keyword id="KW-0375">Hydrogen ion transport</keyword>
<keyword id="KW-0406">Ion transport</keyword>
<keyword id="KW-0472">Membrane</keyword>
<keyword id="KW-1185">Reference proteome</keyword>
<keyword id="KW-0812">Transmembrane</keyword>
<keyword id="KW-1133">Transmembrane helix</keyword>
<keyword id="KW-0813">Transport</keyword>
<gene>
    <name evidence="1" type="primary">atpF</name>
    <name type="ordered locus">APL_1650</name>
</gene>
<sequence>MNLNATLIGQLIAFALFVAFCMKFVWPPLIKAIEERQANIANALASAEKAKQEQADSKAAADQEILKAKEEAQKIIDLATKRRNEILETVQAEAEIERQRIIEQGHAEVESERKRVQEELRQKVAALAVAGAEKIVGCSVDQAANNDIIDKLVAEL</sequence>
<name>ATPF_ACTP2</name>